<keyword id="KW-0269">Exonuclease</keyword>
<keyword id="KW-0378">Hydrolase</keyword>
<keyword id="KW-0540">Nuclease</keyword>
<keyword id="KW-0539">Nucleus</keyword>
<keyword id="KW-1185">Reference proteome</keyword>
<feature type="chain" id="PRO_0000317229" description="Uncharacterized exonuclease C637.09">
    <location>
        <begin position="1"/>
        <end position="631"/>
    </location>
</feature>
<feature type="domain" description="Exonuclease">
    <location>
        <begin position="277"/>
        <end position="426"/>
    </location>
</feature>
<feature type="region of interest" description="Disordered" evidence="1">
    <location>
        <begin position="1"/>
        <end position="92"/>
    </location>
</feature>
<feature type="region of interest" description="Disordered" evidence="1">
    <location>
        <begin position="517"/>
        <end position="540"/>
    </location>
</feature>
<feature type="compositionally biased region" description="Polar residues" evidence="1">
    <location>
        <begin position="1"/>
        <end position="19"/>
    </location>
</feature>
<feature type="compositionally biased region" description="Basic residues" evidence="1">
    <location>
        <begin position="67"/>
        <end position="76"/>
    </location>
</feature>
<feature type="compositionally biased region" description="Polar residues" evidence="1">
    <location>
        <begin position="517"/>
        <end position="526"/>
    </location>
</feature>
<feature type="compositionally biased region" description="Acidic residues" evidence="1">
    <location>
        <begin position="527"/>
        <end position="540"/>
    </location>
</feature>
<reference key="1">
    <citation type="journal article" date="2002" name="Nature">
        <title>The genome sequence of Schizosaccharomyces pombe.</title>
        <authorList>
            <person name="Wood V."/>
            <person name="Gwilliam R."/>
            <person name="Rajandream M.A."/>
            <person name="Lyne M.H."/>
            <person name="Lyne R."/>
            <person name="Stewart A."/>
            <person name="Sgouros J.G."/>
            <person name="Peat N."/>
            <person name="Hayles J."/>
            <person name="Baker S.G."/>
            <person name="Basham D."/>
            <person name="Bowman S."/>
            <person name="Brooks K."/>
            <person name="Brown D."/>
            <person name="Brown S."/>
            <person name="Chillingworth T."/>
            <person name="Churcher C.M."/>
            <person name="Collins M."/>
            <person name="Connor R."/>
            <person name="Cronin A."/>
            <person name="Davis P."/>
            <person name="Feltwell T."/>
            <person name="Fraser A."/>
            <person name="Gentles S."/>
            <person name="Goble A."/>
            <person name="Hamlin N."/>
            <person name="Harris D.E."/>
            <person name="Hidalgo J."/>
            <person name="Hodgson G."/>
            <person name="Holroyd S."/>
            <person name="Hornsby T."/>
            <person name="Howarth S."/>
            <person name="Huckle E.J."/>
            <person name="Hunt S."/>
            <person name="Jagels K."/>
            <person name="James K.D."/>
            <person name="Jones L."/>
            <person name="Jones M."/>
            <person name="Leather S."/>
            <person name="McDonald S."/>
            <person name="McLean J."/>
            <person name="Mooney P."/>
            <person name="Moule S."/>
            <person name="Mungall K.L."/>
            <person name="Murphy L.D."/>
            <person name="Niblett D."/>
            <person name="Odell C."/>
            <person name="Oliver K."/>
            <person name="O'Neil S."/>
            <person name="Pearson D."/>
            <person name="Quail M.A."/>
            <person name="Rabbinowitsch E."/>
            <person name="Rutherford K.M."/>
            <person name="Rutter S."/>
            <person name="Saunders D."/>
            <person name="Seeger K."/>
            <person name="Sharp S."/>
            <person name="Skelton J."/>
            <person name="Simmonds M.N."/>
            <person name="Squares R."/>
            <person name="Squares S."/>
            <person name="Stevens K."/>
            <person name="Taylor K."/>
            <person name="Taylor R.G."/>
            <person name="Tivey A."/>
            <person name="Walsh S.V."/>
            <person name="Warren T."/>
            <person name="Whitehead S."/>
            <person name="Woodward J.R."/>
            <person name="Volckaert G."/>
            <person name="Aert R."/>
            <person name="Robben J."/>
            <person name="Grymonprez B."/>
            <person name="Weltjens I."/>
            <person name="Vanstreels E."/>
            <person name="Rieger M."/>
            <person name="Schaefer M."/>
            <person name="Mueller-Auer S."/>
            <person name="Gabel C."/>
            <person name="Fuchs M."/>
            <person name="Duesterhoeft A."/>
            <person name="Fritzc C."/>
            <person name="Holzer E."/>
            <person name="Moestl D."/>
            <person name="Hilbert H."/>
            <person name="Borzym K."/>
            <person name="Langer I."/>
            <person name="Beck A."/>
            <person name="Lehrach H."/>
            <person name="Reinhardt R."/>
            <person name="Pohl T.M."/>
            <person name="Eger P."/>
            <person name="Zimmermann W."/>
            <person name="Wedler H."/>
            <person name="Wambutt R."/>
            <person name="Purnelle B."/>
            <person name="Goffeau A."/>
            <person name="Cadieu E."/>
            <person name="Dreano S."/>
            <person name="Gloux S."/>
            <person name="Lelaure V."/>
            <person name="Mottier S."/>
            <person name="Galibert F."/>
            <person name="Aves S.J."/>
            <person name="Xiang Z."/>
            <person name="Hunt C."/>
            <person name="Moore K."/>
            <person name="Hurst S.M."/>
            <person name="Lucas M."/>
            <person name="Rochet M."/>
            <person name="Gaillardin C."/>
            <person name="Tallada V.A."/>
            <person name="Garzon A."/>
            <person name="Thode G."/>
            <person name="Daga R.R."/>
            <person name="Cruzado L."/>
            <person name="Jimenez J."/>
            <person name="Sanchez M."/>
            <person name="del Rey F."/>
            <person name="Benito J."/>
            <person name="Dominguez A."/>
            <person name="Revuelta J.L."/>
            <person name="Moreno S."/>
            <person name="Armstrong J."/>
            <person name="Forsburg S.L."/>
            <person name="Cerutti L."/>
            <person name="Lowe T."/>
            <person name="McCombie W.R."/>
            <person name="Paulsen I."/>
            <person name="Potashkin J."/>
            <person name="Shpakovski G.V."/>
            <person name="Ussery D."/>
            <person name="Barrell B.G."/>
            <person name="Nurse P."/>
        </authorList>
    </citation>
    <scope>NUCLEOTIDE SEQUENCE [LARGE SCALE GENOMIC DNA]</scope>
    <source>
        <strain>972 / ATCC 24843</strain>
    </source>
</reference>
<reference key="2">
    <citation type="journal article" date="2011" name="Science">
        <title>Comparative functional genomics of the fission yeasts.</title>
        <authorList>
            <person name="Rhind N."/>
            <person name="Chen Z."/>
            <person name="Yassour M."/>
            <person name="Thompson D.A."/>
            <person name="Haas B.J."/>
            <person name="Habib N."/>
            <person name="Wapinski I."/>
            <person name="Roy S."/>
            <person name="Lin M.F."/>
            <person name="Heiman D.I."/>
            <person name="Young S.K."/>
            <person name="Furuya K."/>
            <person name="Guo Y."/>
            <person name="Pidoux A."/>
            <person name="Chen H.M."/>
            <person name="Robbertse B."/>
            <person name="Goldberg J.M."/>
            <person name="Aoki K."/>
            <person name="Bayne E.H."/>
            <person name="Berlin A.M."/>
            <person name="Desjardins C.A."/>
            <person name="Dobbs E."/>
            <person name="Dukaj L."/>
            <person name="Fan L."/>
            <person name="FitzGerald M.G."/>
            <person name="French C."/>
            <person name="Gujja S."/>
            <person name="Hansen K."/>
            <person name="Keifenheim D."/>
            <person name="Levin J.Z."/>
            <person name="Mosher R.A."/>
            <person name="Mueller C.A."/>
            <person name="Pfiffner J."/>
            <person name="Priest M."/>
            <person name="Russ C."/>
            <person name="Smialowska A."/>
            <person name="Swoboda P."/>
            <person name="Sykes S.M."/>
            <person name="Vaughn M."/>
            <person name="Vengrova S."/>
            <person name="Yoder R."/>
            <person name="Zeng Q."/>
            <person name="Allshire R."/>
            <person name="Baulcombe D."/>
            <person name="Birren B.W."/>
            <person name="Brown W."/>
            <person name="Ekwall K."/>
            <person name="Kellis M."/>
            <person name="Leatherwood J."/>
            <person name="Levin H."/>
            <person name="Margalit H."/>
            <person name="Martienssen R."/>
            <person name="Nieduszynski C.A."/>
            <person name="Spatafora J.W."/>
            <person name="Friedman N."/>
            <person name="Dalgaard J.Z."/>
            <person name="Baumann P."/>
            <person name="Niki H."/>
            <person name="Regev A."/>
            <person name="Nusbaum C."/>
        </authorList>
    </citation>
    <scope>REVISION OF GENE MODEL</scope>
</reference>
<reference key="3">
    <citation type="journal article" date="2006" name="Nat. Biotechnol.">
        <title>ORFeome cloning and global analysis of protein localization in the fission yeast Schizosaccharomyces pombe.</title>
        <authorList>
            <person name="Matsuyama A."/>
            <person name="Arai R."/>
            <person name="Yashiroda Y."/>
            <person name="Shirai A."/>
            <person name="Kamata A."/>
            <person name="Sekido S."/>
            <person name="Kobayashi Y."/>
            <person name="Hashimoto A."/>
            <person name="Hamamoto M."/>
            <person name="Hiraoka Y."/>
            <person name="Horinouchi S."/>
            <person name="Yoshida M."/>
        </authorList>
    </citation>
    <scope>SUBCELLULAR LOCATION [LARGE SCALE ANALYSIS]</scope>
</reference>
<proteinExistence type="inferred from homology"/>
<protein>
    <recommendedName>
        <fullName>Uncharacterized exonuclease C637.09</fullName>
        <ecNumber>3.1.-.-</ecNumber>
    </recommendedName>
</protein>
<evidence type="ECO:0000256" key="1">
    <source>
        <dbReference type="SAM" id="MobiDB-lite"/>
    </source>
</evidence>
<evidence type="ECO:0000269" key="2">
    <source>
    </source>
</evidence>
<evidence type="ECO:0000305" key="3"/>
<comment type="subcellular location">
    <subcellularLocation>
        <location evidence="2">Nucleus</location>
    </subcellularLocation>
</comment>
<comment type="similarity">
    <text evidence="3">Belongs to the REXO1/REXO3 family.</text>
</comment>
<sequence>MSKMGSSSMGELQDGITQEDSIEKKSKNVASHGEKRKVKRKKEDLSMDGSNDGVKDSPDSNDDSQSKKKKKKKLKKSQQPLNEENYPRLQTTENNLQKPLKISDLQELVFWCLADGQAPSWVLVRNKQMIHRAVILLVPGLEPSQFGFQPVRGNKHSFLLPNLLNENGPIQLPDFCEVFDRAWPTRSPGDRFRVFSPVNAFLQSPLSNEQKKKRDKETRAMASFSKPSDYLMSYESFIEDEYPLHPTVMKGEEVTQPSGWVASAGDFHSPPINPKILAIDCEMVRTENGLEIARVTIVDMKSEVIYDEFVKPESPVTDYVTQYSGITEEKLRNVTTVLSDVQSYLKKTVDNNTVLLGHSLNSDLNCLKFTHPHIIDTANIYNHTRGPPSKPSLKWLATKWLRREIQKAGALGHDSAEDALACVDLLKLKVKNGPAFGLFNQDFESIFHRLSRQQPTPLIGAIADYGNPESCIGKAAHKSVSCANDDEVVSAVVSLSDMHNFVWGRFRELEHAAMWNANRNTKQENNSDTDTENDSVEEDQVTSYSSALERFNRRIRLLYDSLPKGSLLLLYTGTGNPIEMSKLNAIRQQFRKEYQTKKWDELSVKWTDEENMKYISAVENTRNGLSFMTIK</sequence>
<name>YFE9_SCHPO</name>
<gene>
    <name type="ORF">SPAC637.09</name>
</gene>
<accession>O94443</accession>
<organism>
    <name type="scientific">Schizosaccharomyces pombe (strain 972 / ATCC 24843)</name>
    <name type="common">Fission yeast</name>
    <dbReference type="NCBI Taxonomy" id="284812"/>
    <lineage>
        <taxon>Eukaryota</taxon>
        <taxon>Fungi</taxon>
        <taxon>Dikarya</taxon>
        <taxon>Ascomycota</taxon>
        <taxon>Taphrinomycotina</taxon>
        <taxon>Schizosaccharomycetes</taxon>
        <taxon>Schizosaccharomycetales</taxon>
        <taxon>Schizosaccharomycetaceae</taxon>
        <taxon>Schizosaccharomyces</taxon>
    </lineage>
</organism>
<dbReference type="EC" id="3.1.-.-"/>
<dbReference type="EMBL" id="CU329670">
    <property type="protein sequence ID" value="CAA22588.2"/>
    <property type="molecule type" value="Genomic_DNA"/>
</dbReference>
<dbReference type="PIR" id="T39001">
    <property type="entry name" value="T39001"/>
</dbReference>
<dbReference type="RefSeq" id="NP_594627.2">
    <property type="nucleotide sequence ID" value="NM_001020055.2"/>
</dbReference>
<dbReference type="SMR" id="O94443"/>
<dbReference type="BioGRID" id="279923">
    <property type="interactions" value="3"/>
</dbReference>
<dbReference type="FunCoup" id="O94443">
    <property type="interactions" value="465"/>
</dbReference>
<dbReference type="STRING" id="284812.O94443"/>
<dbReference type="iPTMnet" id="O94443"/>
<dbReference type="PaxDb" id="4896-SPAC637.09.1"/>
<dbReference type="EnsemblFungi" id="SPAC637.09.1">
    <property type="protein sequence ID" value="SPAC637.09.1:pep"/>
    <property type="gene ID" value="SPAC637.09"/>
</dbReference>
<dbReference type="KEGG" id="spo:2543505"/>
<dbReference type="PomBase" id="SPAC637.09"/>
<dbReference type="VEuPathDB" id="FungiDB:SPAC637.09"/>
<dbReference type="eggNOG" id="KOG2248">
    <property type="taxonomic scope" value="Eukaryota"/>
</dbReference>
<dbReference type="HOGENOM" id="CLU_008679_1_0_1"/>
<dbReference type="InParanoid" id="O94443"/>
<dbReference type="OMA" id="HKAGPPF"/>
<dbReference type="PRO" id="PR:O94443"/>
<dbReference type="Proteomes" id="UP000002485">
    <property type="component" value="Chromosome I"/>
</dbReference>
<dbReference type="GO" id="GO:0005634">
    <property type="term" value="C:nucleus"/>
    <property type="evidence" value="ECO:0007005"/>
    <property type="project" value="PomBase"/>
</dbReference>
<dbReference type="GO" id="GO:0000175">
    <property type="term" value="F:3'-5'-RNA exonuclease activity"/>
    <property type="evidence" value="ECO:0000266"/>
    <property type="project" value="PomBase"/>
</dbReference>
<dbReference type="GO" id="GO:0004527">
    <property type="term" value="F:exonuclease activity"/>
    <property type="evidence" value="ECO:0000318"/>
    <property type="project" value="GO_Central"/>
</dbReference>
<dbReference type="GO" id="GO:0003676">
    <property type="term" value="F:nucleic acid binding"/>
    <property type="evidence" value="ECO:0007669"/>
    <property type="project" value="InterPro"/>
</dbReference>
<dbReference type="GO" id="GO:0000467">
    <property type="term" value="P:exonucleolytic trimming to generate mature 3'-end of 5.8S rRNA from tricistronic rRNA transcript (SSU-rRNA, 5.8S rRNA, LSU-rRNA)"/>
    <property type="evidence" value="ECO:0000266"/>
    <property type="project" value="PomBase"/>
</dbReference>
<dbReference type="GO" id="GO:0031125">
    <property type="term" value="P:rRNA 3'-end processing"/>
    <property type="evidence" value="ECO:0000318"/>
    <property type="project" value="GO_Central"/>
</dbReference>
<dbReference type="GO" id="GO:0042780">
    <property type="term" value="P:tRNA 3'-end processing"/>
    <property type="evidence" value="ECO:0000266"/>
    <property type="project" value="PomBase"/>
</dbReference>
<dbReference type="GO" id="GO:0034476">
    <property type="term" value="P:U5 snRNA 3'-end processing"/>
    <property type="evidence" value="ECO:0000266"/>
    <property type="project" value="PomBase"/>
</dbReference>
<dbReference type="CDD" id="cd06145">
    <property type="entry name" value="REX1_like"/>
    <property type="match status" value="1"/>
</dbReference>
<dbReference type="FunFam" id="3.30.420.10:FF:000031">
    <property type="entry name" value="RNA exonuclease 1"/>
    <property type="match status" value="1"/>
</dbReference>
<dbReference type="Gene3D" id="3.30.420.10">
    <property type="entry name" value="Ribonuclease H-like superfamily/Ribonuclease H"/>
    <property type="match status" value="1"/>
</dbReference>
<dbReference type="InterPro" id="IPR013520">
    <property type="entry name" value="Exonuclease_RNaseT/DNA_pol3"/>
</dbReference>
<dbReference type="InterPro" id="IPR034922">
    <property type="entry name" value="REX1-like_exo"/>
</dbReference>
<dbReference type="InterPro" id="IPR047021">
    <property type="entry name" value="REXO1/3/4-like"/>
</dbReference>
<dbReference type="InterPro" id="IPR012337">
    <property type="entry name" value="RNaseH-like_sf"/>
</dbReference>
<dbReference type="InterPro" id="IPR036397">
    <property type="entry name" value="RNaseH_sf"/>
</dbReference>
<dbReference type="PANTHER" id="PTHR12801:SF155">
    <property type="entry name" value="RIBONUCLEASE H70"/>
    <property type="match status" value="1"/>
</dbReference>
<dbReference type="PANTHER" id="PTHR12801">
    <property type="entry name" value="RNA EXONUCLEASE REXO1 / RECO3 FAMILY MEMBER-RELATED"/>
    <property type="match status" value="1"/>
</dbReference>
<dbReference type="Pfam" id="PF00929">
    <property type="entry name" value="RNase_T"/>
    <property type="match status" value="1"/>
</dbReference>
<dbReference type="SMART" id="SM00479">
    <property type="entry name" value="EXOIII"/>
    <property type="match status" value="1"/>
</dbReference>
<dbReference type="SUPFAM" id="SSF53098">
    <property type="entry name" value="Ribonuclease H-like"/>
    <property type="match status" value="1"/>
</dbReference>